<keyword id="KW-0963">Cytoplasm</keyword>
<keyword id="KW-0227">DNA damage</keyword>
<keyword id="KW-0234">DNA repair</keyword>
<keyword id="KW-0378">Hydrolase</keyword>
<keyword id="KW-1185">Reference proteome</keyword>
<protein>
    <recommendedName>
        <fullName evidence="1">Uracil-DNA glycosylase</fullName>
        <shortName evidence="1">UDG</shortName>
        <ecNumber evidence="1">3.2.2.27</ecNumber>
    </recommendedName>
</protein>
<sequence>MQHSAWHALIKEQLPEGYFAKINHFLDEVYASGTIYPPREKVFNAIQTTDLADVKVVILGQDPYHGPRQAQGLSFSVPDDIPAPPSLQNILKELADDIGVKESHDLTSWAQQGVLLLNAGLTVPAGQANAHAGLIWESFTDAIIKVVNEKSDPVVFILWGSYARKKKALISNPQHLIIESAHPSPLSAYRGFFGSKPFSRTNDFLVAKGLEPINWLA</sequence>
<proteinExistence type="inferred from homology"/>
<evidence type="ECO:0000255" key="1">
    <source>
        <dbReference type="HAMAP-Rule" id="MF_00148"/>
    </source>
</evidence>
<feature type="chain" id="PRO_1000009957" description="Uracil-DNA glycosylase">
    <location>
        <begin position="1"/>
        <end position="217"/>
    </location>
</feature>
<feature type="active site" description="Proton acceptor" evidence="1">
    <location>
        <position position="62"/>
    </location>
</feature>
<dbReference type="EC" id="3.2.2.27" evidence="1"/>
<dbReference type="EMBL" id="CP000387">
    <property type="protein sequence ID" value="ABN44640.1"/>
    <property type="molecule type" value="Genomic_DNA"/>
</dbReference>
<dbReference type="RefSeq" id="WP_011837010.1">
    <property type="nucleotide sequence ID" value="NC_009009.1"/>
</dbReference>
<dbReference type="RefSeq" id="YP_001035190.1">
    <property type="nucleotide sequence ID" value="NC_009009.1"/>
</dbReference>
<dbReference type="SMR" id="A3CN85"/>
<dbReference type="STRING" id="388919.SSA_1237"/>
<dbReference type="KEGG" id="ssa:SSA_1237"/>
<dbReference type="PATRIC" id="fig|388919.9.peg.1177"/>
<dbReference type="eggNOG" id="COG0692">
    <property type="taxonomic scope" value="Bacteria"/>
</dbReference>
<dbReference type="HOGENOM" id="CLU_032162_3_1_9"/>
<dbReference type="OrthoDB" id="9804372at2"/>
<dbReference type="Proteomes" id="UP000002148">
    <property type="component" value="Chromosome"/>
</dbReference>
<dbReference type="GO" id="GO:0005737">
    <property type="term" value="C:cytoplasm"/>
    <property type="evidence" value="ECO:0007669"/>
    <property type="project" value="UniProtKB-SubCell"/>
</dbReference>
<dbReference type="GO" id="GO:0004844">
    <property type="term" value="F:uracil DNA N-glycosylase activity"/>
    <property type="evidence" value="ECO:0007669"/>
    <property type="project" value="UniProtKB-UniRule"/>
</dbReference>
<dbReference type="GO" id="GO:0097510">
    <property type="term" value="P:base-excision repair, AP site formation via deaminated base removal"/>
    <property type="evidence" value="ECO:0007669"/>
    <property type="project" value="TreeGrafter"/>
</dbReference>
<dbReference type="CDD" id="cd10027">
    <property type="entry name" value="UDG-F1-like"/>
    <property type="match status" value="1"/>
</dbReference>
<dbReference type="FunFam" id="3.40.470.10:FF:000008">
    <property type="entry name" value="Uracil-DNA glycosylase"/>
    <property type="match status" value="1"/>
</dbReference>
<dbReference type="Gene3D" id="3.40.470.10">
    <property type="entry name" value="Uracil-DNA glycosylase-like domain"/>
    <property type="match status" value="1"/>
</dbReference>
<dbReference type="HAMAP" id="MF_00148">
    <property type="entry name" value="UDG"/>
    <property type="match status" value="1"/>
</dbReference>
<dbReference type="InterPro" id="IPR002043">
    <property type="entry name" value="UDG_fam1"/>
</dbReference>
<dbReference type="InterPro" id="IPR018085">
    <property type="entry name" value="Ura-DNA_Glyclase_AS"/>
</dbReference>
<dbReference type="InterPro" id="IPR005122">
    <property type="entry name" value="Uracil-DNA_glycosylase-like"/>
</dbReference>
<dbReference type="InterPro" id="IPR036895">
    <property type="entry name" value="Uracil-DNA_glycosylase-like_sf"/>
</dbReference>
<dbReference type="NCBIfam" id="NF003588">
    <property type="entry name" value="PRK05254.1-1"/>
    <property type="match status" value="1"/>
</dbReference>
<dbReference type="NCBIfam" id="NF003589">
    <property type="entry name" value="PRK05254.1-2"/>
    <property type="match status" value="1"/>
</dbReference>
<dbReference type="NCBIfam" id="NF003591">
    <property type="entry name" value="PRK05254.1-4"/>
    <property type="match status" value="1"/>
</dbReference>
<dbReference type="NCBIfam" id="NF003592">
    <property type="entry name" value="PRK05254.1-5"/>
    <property type="match status" value="1"/>
</dbReference>
<dbReference type="NCBIfam" id="TIGR00628">
    <property type="entry name" value="ung"/>
    <property type="match status" value="1"/>
</dbReference>
<dbReference type="PANTHER" id="PTHR11264">
    <property type="entry name" value="URACIL-DNA GLYCOSYLASE"/>
    <property type="match status" value="1"/>
</dbReference>
<dbReference type="PANTHER" id="PTHR11264:SF0">
    <property type="entry name" value="URACIL-DNA GLYCOSYLASE"/>
    <property type="match status" value="1"/>
</dbReference>
<dbReference type="Pfam" id="PF03167">
    <property type="entry name" value="UDG"/>
    <property type="match status" value="1"/>
</dbReference>
<dbReference type="SMART" id="SM00986">
    <property type="entry name" value="UDG"/>
    <property type="match status" value="1"/>
</dbReference>
<dbReference type="SMART" id="SM00987">
    <property type="entry name" value="UreE_C"/>
    <property type="match status" value="1"/>
</dbReference>
<dbReference type="SUPFAM" id="SSF52141">
    <property type="entry name" value="Uracil-DNA glycosylase-like"/>
    <property type="match status" value="1"/>
</dbReference>
<dbReference type="PROSITE" id="PS00130">
    <property type="entry name" value="U_DNA_GLYCOSYLASE"/>
    <property type="match status" value="1"/>
</dbReference>
<name>UNG_STRSV</name>
<comment type="function">
    <text evidence="1">Excises uracil residues from the DNA which can arise as a result of misincorporation of dUMP residues by DNA polymerase or due to deamination of cytosine.</text>
</comment>
<comment type="catalytic activity">
    <reaction evidence="1">
        <text>Hydrolyzes single-stranded DNA or mismatched double-stranded DNA and polynucleotides, releasing free uracil.</text>
        <dbReference type="EC" id="3.2.2.27"/>
    </reaction>
</comment>
<comment type="subcellular location">
    <subcellularLocation>
        <location evidence="1">Cytoplasm</location>
    </subcellularLocation>
</comment>
<comment type="similarity">
    <text evidence="1">Belongs to the uracil-DNA glycosylase (UDG) superfamily. UNG family.</text>
</comment>
<organism>
    <name type="scientific">Streptococcus sanguinis (strain SK36)</name>
    <dbReference type="NCBI Taxonomy" id="388919"/>
    <lineage>
        <taxon>Bacteria</taxon>
        <taxon>Bacillati</taxon>
        <taxon>Bacillota</taxon>
        <taxon>Bacilli</taxon>
        <taxon>Lactobacillales</taxon>
        <taxon>Streptococcaceae</taxon>
        <taxon>Streptococcus</taxon>
    </lineage>
</organism>
<accession>A3CN85</accession>
<gene>
    <name evidence="1" type="primary">ung</name>
    <name type="ordered locus">SSA_1237</name>
</gene>
<reference key="1">
    <citation type="journal article" date="2007" name="J. Bacteriol.">
        <title>Genome of the opportunistic pathogen Streptococcus sanguinis.</title>
        <authorList>
            <person name="Xu P."/>
            <person name="Alves J.M."/>
            <person name="Kitten T."/>
            <person name="Brown A."/>
            <person name="Chen Z."/>
            <person name="Ozaki L.S."/>
            <person name="Manque P."/>
            <person name="Ge X."/>
            <person name="Serrano M.G."/>
            <person name="Puiu D."/>
            <person name="Hendricks S."/>
            <person name="Wang Y."/>
            <person name="Chaplin M.D."/>
            <person name="Akan D."/>
            <person name="Paik S."/>
            <person name="Peterson D.L."/>
            <person name="Macrina F.L."/>
            <person name="Buck G.A."/>
        </authorList>
    </citation>
    <scope>NUCLEOTIDE SEQUENCE [LARGE SCALE GENOMIC DNA]</scope>
    <source>
        <strain>SK36</strain>
    </source>
</reference>